<proteinExistence type="inferred from homology"/>
<keyword id="KW-0028">Amino-acid biosynthesis</keyword>
<keyword id="KW-0378">Hydrolase</keyword>
<keyword id="KW-0460">Magnesium</keyword>
<keyword id="KW-0479">Metal-binding</keyword>
<keyword id="KW-0486">Methionine biosynthesis</keyword>
<accession>B0U3A6</accession>
<sequence>MSMPQAILTDIEGTTSSLSFVKEVLFPYARRALPDFVREHREHPDVMPWLDQVANETGTAFSEEALVATLQTWIDTDSKHTALKALQGMIWASGYQNGDFTTHLYPDAVQRLRAWHAANVPLYVYSSGSVPAQQLFFRHSHAGDLSGLFSGWFDTKIGGKRESTSYQRIAQHIGIAPAGIVFLSDVIEELNAAAQIGLNTVLIDRRDDYPTPRHLKDTDRHLHLDSFAQLPF</sequence>
<organism>
    <name type="scientific">Xylella fastidiosa (strain M12)</name>
    <dbReference type="NCBI Taxonomy" id="405440"/>
    <lineage>
        <taxon>Bacteria</taxon>
        <taxon>Pseudomonadati</taxon>
        <taxon>Pseudomonadota</taxon>
        <taxon>Gammaproteobacteria</taxon>
        <taxon>Lysobacterales</taxon>
        <taxon>Lysobacteraceae</taxon>
        <taxon>Xylella</taxon>
    </lineage>
</organism>
<comment type="function">
    <text evidence="1">Bifunctional enzyme that catalyzes the enolization of 2,3-diketo-5-methylthiopentyl-1-phosphate (DK-MTP-1-P) into the intermediate 2-hydroxy-3-keto-5-methylthiopentenyl-1-phosphate (HK-MTPenyl-1-P), which is then dephosphorylated to form the acireductone 1,2-dihydroxy-3-keto-5-methylthiopentene (DHK-MTPene).</text>
</comment>
<comment type="catalytic activity">
    <reaction evidence="1">
        <text>5-methylsulfanyl-2,3-dioxopentyl phosphate + H2O = 1,2-dihydroxy-5-(methylsulfanyl)pent-1-en-3-one + phosphate</text>
        <dbReference type="Rhea" id="RHEA:21700"/>
        <dbReference type="ChEBI" id="CHEBI:15377"/>
        <dbReference type="ChEBI" id="CHEBI:43474"/>
        <dbReference type="ChEBI" id="CHEBI:49252"/>
        <dbReference type="ChEBI" id="CHEBI:58828"/>
        <dbReference type="EC" id="3.1.3.77"/>
    </reaction>
</comment>
<comment type="cofactor">
    <cofactor evidence="1">
        <name>Mg(2+)</name>
        <dbReference type="ChEBI" id="CHEBI:18420"/>
    </cofactor>
    <text evidence="1">Binds 1 Mg(2+) ion per subunit.</text>
</comment>
<comment type="pathway">
    <text evidence="1">Amino-acid biosynthesis; L-methionine biosynthesis via salvage pathway; L-methionine from S-methyl-5-thio-alpha-D-ribose 1-phosphate: step 3/6.</text>
</comment>
<comment type="pathway">
    <text evidence="1">Amino-acid biosynthesis; L-methionine biosynthesis via salvage pathway; L-methionine from S-methyl-5-thio-alpha-D-ribose 1-phosphate: step 4/6.</text>
</comment>
<comment type="subunit">
    <text evidence="1">Monomer.</text>
</comment>
<comment type="similarity">
    <text evidence="1">Belongs to the HAD-like hydrolase superfamily. MasA/MtnC family.</text>
</comment>
<name>MTNC_XYLFM</name>
<protein>
    <recommendedName>
        <fullName evidence="1">Enolase-phosphatase E1</fullName>
        <ecNumber evidence="1">3.1.3.77</ecNumber>
    </recommendedName>
    <alternativeName>
        <fullName evidence="1">2,3-diketo-5-methylthio-1-phosphopentane phosphatase</fullName>
    </alternativeName>
</protein>
<reference key="1">
    <citation type="journal article" date="2010" name="J. Bacteriol.">
        <title>Whole genome sequences of two Xylella fastidiosa strains (M12 and M23) causing almond leaf scorch disease in California.</title>
        <authorList>
            <person name="Chen J."/>
            <person name="Xie G."/>
            <person name="Han S."/>
            <person name="Chertkov O."/>
            <person name="Sims D."/>
            <person name="Civerolo E.L."/>
        </authorList>
    </citation>
    <scope>NUCLEOTIDE SEQUENCE [LARGE SCALE GENOMIC DNA]</scope>
    <source>
        <strain>M12</strain>
    </source>
</reference>
<dbReference type="EC" id="3.1.3.77" evidence="1"/>
<dbReference type="EMBL" id="CP000941">
    <property type="protein sequence ID" value="ACA12335.1"/>
    <property type="molecule type" value="Genomic_DNA"/>
</dbReference>
<dbReference type="RefSeq" id="WP_012337945.1">
    <property type="nucleotide sequence ID" value="NC_010513.1"/>
</dbReference>
<dbReference type="SMR" id="B0U3A6"/>
<dbReference type="KEGG" id="xfm:Xfasm12_1412"/>
<dbReference type="HOGENOM" id="CLU_023273_0_0_6"/>
<dbReference type="UniPathway" id="UPA00904">
    <property type="reaction ID" value="UER00876"/>
</dbReference>
<dbReference type="UniPathway" id="UPA00904">
    <property type="reaction ID" value="UER00877"/>
</dbReference>
<dbReference type="GO" id="GO:0043715">
    <property type="term" value="F:2,3-diketo-5-methylthiopentyl-1-phosphate enolase activity"/>
    <property type="evidence" value="ECO:0007669"/>
    <property type="project" value="UniProtKB-UniRule"/>
</dbReference>
<dbReference type="GO" id="GO:0043716">
    <property type="term" value="F:2-hydroxy-3-keto-5-methylthiopentenyl-1-phosphate phosphatase activity"/>
    <property type="evidence" value="ECO:0007669"/>
    <property type="project" value="UniProtKB-UniRule"/>
</dbReference>
<dbReference type="GO" id="GO:0043874">
    <property type="term" value="F:acireductone synthase activity"/>
    <property type="evidence" value="ECO:0007669"/>
    <property type="project" value="UniProtKB-EC"/>
</dbReference>
<dbReference type="GO" id="GO:0000287">
    <property type="term" value="F:magnesium ion binding"/>
    <property type="evidence" value="ECO:0007669"/>
    <property type="project" value="UniProtKB-UniRule"/>
</dbReference>
<dbReference type="GO" id="GO:0019509">
    <property type="term" value="P:L-methionine salvage from methylthioadenosine"/>
    <property type="evidence" value="ECO:0007669"/>
    <property type="project" value="UniProtKB-UniRule"/>
</dbReference>
<dbReference type="CDD" id="cd01629">
    <property type="entry name" value="HAD_EP"/>
    <property type="match status" value="1"/>
</dbReference>
<dbReference type="Gene3D" id="1.10.720.60">
    <property type="match status" value="1"/>
</dbReference>
<dbReference type="Gene3D" id="3.40.50.1000">
    <property type="entry name" value="HAD superfamily/HAD-like"/>
    <property type="match status" value="1"/>
</dbReference>
<dbReference type="HAMAP" id="MF_01681">
    <property type="entry name" value="Salvage_MtnC"/>
    <property type="match status" value="1"/>
</dbReference>
<dbReference type="InterPro" id="IPR023943">
    <property type="entry name" value="Enolase-ppase_E1"/>
</dbReference>
<dbReference type="InterPro" id="IPR036412">
    <property type="entry name" value="HAD-like_sf"/>
</dbReference>
<dbReference type="InterPro" id="IPR006439">
    <property type="entry name" value="HAD-SF_hydro_IA"/>
</dbReference>
<dbReference type="InterPro" id="IPR023214">
    <property type="entry name" value="HAD_sf"/>
</dbReference>
<dbReference type="NCBIfam" id="TIGR01691">
    <property type="entry name" value="enolase-ppase"/>
    <property type="match status" value="1"/>
</dbReference>
<dbReference type="NCBIfam" id="TIGR01549">
    <property type="entry name" value="HAD-SF-IA-v1"/>
    <property type="match status" value="1"/>
</dbReference>
<dbReference type="PANTHER" id="PTHR20371">
    <property type="entry name" value="ENOLASE-PHOSPHATASE E1"/>
    <property type="match status" value="1"/>
</dbReference>
<dbReference type="PANTHER" id="PTHR20371:SF1">
    <property type="entry name" value="ENOLASE-PHOSPHATASE E1"/>
    <property type="match status" value="1"/>
</dbReference>
<dbReference type="Pfam" id="PF00702">
    <property type="entry name" value="Hydrolase"/>
    <property type="match status" value="1"/>
</dbReference>
<dbReference type="SFLD" id="SFLDF00044">
    <property type="entry name" value="enolase-phosphatase"/>
    <property type="match status" value="1"/>
</dbReference>
<dbReference type="SFLD" id="SFLDS00003">
    <property type="entry name" value="Haloacid_Dehalogenase"/>
    <property type="match status" value="1"/>
</dbReference>
<dbReference type="SUPFAM" id="SSF56784">
    <property type="entry name" value="HAD-like"/>
    <property type="match status" value="1"/>
</dbReference>
<evidence type="ECO:0000255" key="1">
    <source>
        <dbReference type="HAMAP-Rule" id="MF_01681"/>
    </source>
</evidence>
<feature type="chain" id="PRO_0000357436" description="Enolase-phosphatase E1">
    <location>
        <begin position="1"/>
        <end position="232"/>
    </location>
</feature>
<gene>
    <name evidence="1" type="primary">mtnC</name>
    <name type="ordered locus">Xfasm12_1412</name>
</gene>